<proteinExistence type="evidence at transcript level"/>
<keyword id="KW-0175">Coiled coil</keyword>
<keyword id="KW-0472">Membrane</keyword>
<keyword id="KW-0539">Nucleus</keyword>
<keyword id="KW-1185">Reference proteome</keyword>
<keyword id="KW-0812">Transmembrane</keyword>
<keyword id="KW-1133">Transmembrane helix</keyword>
<dbReference type="EMBL" id="BC122785">
    <property type="protein sequence ID" value="AAI22786.1"/>
    <property type="status" value="ALT_SEQ"/>
    <property type="molecule type" value="mRNA"/>
</dbReference>
<dbReference type="RefSeq" id="NP_001069552.2">
    <property type="nucleotide sequence ID" value="NM_001076084.2"/>
</dbReference>
<dbReference type="SMR" id="Q0II64"/>
<dbReference type="FunCoup" id="Q0II64">
    <property type="interactions" value="111"/>
</dbReference>
<dbReference type="STRING" id="9913.ENSBTAP00000010721"/>
<dbReference type="PaxDb" id="9913-ENSBTAP00000010721"/>
<dbReference type="GeneID" id="537130"/>
<dbReference type="KEGG" id="bta:537130"/>
<dbReference type="CTD" id="256979"/>
<dbReference type="eggNOG" id="KOG2687">
    <property type="taxonomic scope" value="Eukaryota"/>
</dbReference>
<dbReference type="InParanoid" id="Q0II64"/>
<dbReference type="OrthoDB" id="342281at2759"/>
<dbReference type="Proteomes" id="UP000009136">
    <property type="component" value="Unplaced"/>
</dbReference>
<dbReference type="GO" id="GO:0034993">
    <property type="term" value="C:meiotic nuclear membrane microtubule tethering complex"/>
    <property type="evidence" value="ECO:0000318"/>
    <property type="project" value="GO_Central"/>
</dbReference>
<dbReference type="GO" id="GO:0005635">
    <property type="term" value="C:nuclear envelope"/>
    <property type="evidence" value="ECO:0000318"/>
    <property type="project" value="GO_Central"/>
</dbReference>
<dbReference type="GO" id="GO:0005637">
    <property type="term" value="C:nuclear inner membrane"/>
    <property type="evidence" value="ECO:0007669"/>
    <property type="project" value="UniProtKB-SubCell"/>
</dbReference>
<dbReference type="GO" id="GO:0043495">
    <property type="term" value="F:protein-membrane adaptor activity"/>
    <property type="evidence" value="ECO:0000318"/>
    <property type="project" value="GO_Central"/>
</dbReference>
<dbReference type="FunFam" id="2.60.120.260:FF:000074">
    <property type="entry name" value="Sad1 and UNC84 domain-containing 3"/>
    <property type="match status" value="1"/>
</dbReference>
<dbReference type="Gene3D" id="2.60.120.260">
    <property type="entry name" value="Galactose-binding domain-like"/>
    <property type="match status" value="1"/>
</dbReference>
<dbReference type="InterPro" id="IPR045119">
    <property type="entry name" value="SUN1-5"/>
</dbReference>
<dbReference type="InterPro" id="IPR012919">
    <property type="entry name" value="SUN_dom"/>
</dbReference>
<dbReference type="PANTHER" id="PTHR12911">
    <property type="entry name" value="SAD1/UNC-84-LIKE PROTEIN-RELATED"/>
    <property type="match status" value="1"/>
</dbReference>
<dbReference type="PANTHER" id="PTHR12911:SF24">
    <property type="entry name" value="SUN DOMAIN-CONTAINING PROTEIN 3"/>
    <property type="match status" value="1"/>
</dbReference>
<dbReference type="Pfam" id="PF07738">
    <property type="entry name" value="Sad1_UNC"/>
    <property type="match status" value="1"/>
</dbReference>
<dbReference type="PROSITE" id="PS51469">
    <property type="entry name" value="SUN"/>
    <property type="match status" value="1"/>
</dbReference>
<protein>
    <recommendedName>
        <fullName>SUN domain-containing protein 3</fullName>
    </recommendedName>
    <alternativeName>
        <fullName>Sad1/unc-84 domain-containing protein 1</fullName>
    </alternativeName>
</protein>
<organism>
    <name type="scientific">Bos taurus</name>
    <name type="common">Bovine</name>
    <dbReference type="NCBI Taxonomy" id="9913"/>
    <lineage>
        <taxon>Eukaryota</taxon>
        <taxon>Metazoa</taxon>
        <taxon>Chordata</taxon>
        <taxon>Craniata</taxon>
        <taxon>Vertebrata</taxon>
        <taxon>Euteleostomi</taxon>
        <taxon>Mammalia</taxon>
        <taxon>Eutheria</taxon>
        <taxon>Laurasiatheria</taxon>
        <taxon>Artiodactyla</taxon>
        <taxon>Ruminantia</taxon>
        <taxon>Pecora</taxon>
        <taxon>Bovidae</taxon>
        <taxon>Bovinae</taxon>
        <taxon>Bos</taxon>
    </lineage>
</organism>
<reference key="1">
    <citation type="submission" date="2006-08" db="EMBL/GenBank/DDBJ databases">
        <authorList>
            <consortium name="NIH - Mammalian Gene Collection (MGC) project"/>
        </authorList>
    </citation>
    <scope>NUCLEOTIDE SEQUENCE [LARGE SCALE MRNA]</scope>
    <source>
        <strain>Crossbred X Angus</strain>
        <tissue>Liver</tissue>
    </source>
</reference>
<accession>Q0II64</accession>
<gene>
    <name type="primary">SUN3</name>
    <name type="synonym">SUNC1</name>
</gene>
<sequence>MSGRPNSRGSSRLFRAPSEDASSGSSGSAVLPQEENPNASGLTRSWKAVMGMVFILTLLLLGFINHMKLKEKAFPQKSRQIYAVIAEYGSRLYNYQARLRMPKEQLELLKKESQTLENNFREILFLIEQIDVLKALLRDMQDGLHNYSWNADIDPAEGWNHTEVIDEEMSNLVNYILKKLREDQVQMADYALKSAGASVVEAGTSESYKNNKAKLYWHGIGFLNYEMPPDIILQPDVHPGKCWAFPGSQGHALIKLARKIIPTAVTMEHISEKVSPSGNISSAPKEFSVYGVLKQCEGEEIFLGQFVYNKTGTTVQTFALQHEVPEFLLCVKLKILSNWGHPNYTCLYRFRVHGTPKDDS</sequence>
<name>SUN3_BOVIN</name>
<feature type="chain" id="PRO_0000312219" description="SUN domain-containing protein 3">
    <location>
        <begin position="1"/>
        <end position="360"/>
    </location>
</feature>
<feature type="topological domain" description="Nuclear" evidence="6">
    <location>
        <begin position="1"/>
        <end position="47"/>
    </location>
</feature>
<feature type="transmembrane region" description="Helical" evidence="3">
    <location>
        <begin position="48"/>
        <end position="67"/>
    </location>
</feature>
<feature type="topological domain" description="Perinuclear space" evidence="6">
    <location>
        <begin position="68"/>
        <end position="360"/>
    </location>
</feature>
<feature type="domain" description="SUN" evidence="4">
    <location>
        <begin position="196"/>
        <end position="357"/>
    </location>
</feature>
<feature type="region of interest" description="Disordered" evidence="5">
    <location>
        <begin position="1"/>
        <end position="39"/>
    </location>
</feature>
<feature type="coiled-coil region" evidence="3">
    <location>
        <begin position="103"/>
        <end position="142"/>
    </location>
</feature>
<feature type="compositionally biased region" description="Polar residues" evidence="5">
    <location>
        <begin position="1"/>
        <end position="10"/>
    </location>
</feature>
<evidence type="ECO:0000250" key="1">
    <source>
        <dbReference type="UniProtKB" id="Q5SS91"/>
    </source>
</evidence>
<evidence type="ECO:0000250" key="2">
    <source>
        <dbReference type="UniProtKB" id="Q8TAQ9"/>
    </source>
</evidence>
<evidence type="ECO:0000255" key="3"/>
<evidence type="ECO:0000255" key="4">
    <source>
        <dbReference type="PROSITE-ProRule" id="PRU00802"/>
    </source>
</evidence>
<evidence type="ECO:0000256" key="5">
    <source>
        <dbReference type="SAM" id="MobiDB-lite"/>
    </source>
</evidence>
<evidence type="ECO:0000305" key="6"/>
<comment type="function">
    <text evidence="1">As a probable component of the LINC (LInker of Nucleoskeleton and Cytoskeleton) complex, involved in the connection between the nuclear lamina and the cytoskeleton. The nucleocytoplasmic interactions established by the LINC complex play an important role in the transmission of mechanical forces across the nuclear envelope and in nuclear movement and positioning. May be involved in nuclear remodeling during sperm head formation in spermatogenesis. A probable SUN3:SYNE1 LINC complex may tether spermatid nuclei to posterior cytoskeletal structures such as the manchette.</text>
</comment>
<comment type="subunit">
    <text evidence="1">Self-associates. Interacts with SYNE1 and SPAG4/SUN4. Proposed to form a spermatogenesis-specific LINC complex with SYNE1 during sperm head formation possibly implicating a SUN domain-based heterotrimer with SPAG4/SUN4 associating with SYNE1.</text>
</comment>
<comment type="subcellular location">
    <subcellularLocation>
        <location evidence="6">Membrane</location>
        <topology evidence="6">Single-pass membrane protein</topology>
    </subcellularLocation>
    <subcellularLocation>
        <location evidence="1">Nucleus envelope</location>
    </subcellularLocation>
    <subcellularLocation>
        <location evidence="6">Nucleus inner membrane</location>
    </subcellularLocation>
</comment>
<comment type="domain">
    <text evidence="2">The short coiled coil domain is proposed to be not involved in load-bearing and force transmission from the cytoskeleton but in mere nucleus anchorage instead.</text>
</comment>
<comment type="sequence caution" evidence="6">
    <conflict type="erroneous termination">
        <sequence resource="EMBL-CDS" id="AAI22786"/>
    </conflict>
    <text>Truncated C-terminus.</text>
</comment>